<accession>A0A1L9UR45</accession>
<sequence>MHFWWTAISAGLLCLPQALGRSDSPNYTVEELWKLETTFWDNFLYPANVEQMEAINSTLFTPDVQGRVDITRVFNGSELNTEYIFGLFSDPDHVSLVGVPVDYSIVQFIAQGNIASATTVVTFNATSFGNLLIPVTIDTWIMWDSNGQIVQYDATFRWFGFLLDTLVETLAASINGTTSEATAALTQLLATTICATHDQYCTGANQQYDNNTACYDFLTTAIPLGKDYELGRNTLLCREVHEHMVQYDPALHCPHIGPTGGDYCVDDQTYAQKVLQKYFNQSWIVGVPSTGDIWLGD</sequence>
<name>BFOA_ASPBC</name>
<gene>
    <name evidence="4" type="primary">bfoA</name>
    <name type="ORF">ASPBRDRAFT_145890</name>
</gene>
<proteinExistence type="inferred from homology"/>
<reference key="1">
    <citation type="journal article" date="2017" name="Genome Biol.">
        <title>Comparative genomics reveals high biological diversity and specific adaptations in the industrially and medically important fungal genus Aspergillus.</title>
        <authorList>
            <person name="de Vries R.P."/>
            <person name="Riley R."/>
            <person name="Wiebenga A."/>
            <person name="Aguilar-Osorio G."/>
            <person name="Amillis S."/>
            <person name="Uchima C.A."/>
            <person name="Anderluh G."/>
            <person name="Asadollahi M."/>
            <person name="Askin M."/>
            <person name="Barry K."/>
            <person name="Battaglia E."/>
            <person name="Bayram O."/>
            <person name="Benocci T."/>
            <person name="Braus-Stromeyer S.A."/>
            <person name="Caldana C."/>
            <person name="Canovas D."/>
            <person name="Cerqueira G.C."/>
            <person name="Chen F."/>
            <person name="Chen W."/>
            <person name="Choi C."/>
            <person name="Clum A."/>
            <person name="Dos Santos R.A."/>
            <person name="Damasio A.R."/>
            <person name="Diallinas G."/>
            <person name="Emri T."/>
            <person name="Fekete E."/>
            <person name="Flipphi M."/>
            <person name="Freyberg S."/>
            <person name="Gallo A."/>
            <person name="Gournas C."/>
            <person name="Habgood R."/>
            <person name="Hainaut M."/>
            <person name="Harispe M.L."/>
            <person name="Henrissat B."/>
            <person name="Hilden K.S."/>
            <person name="Hope R."/>
            <person name="Hossain A."/>
            <person name="Karabika E."/>
            <person name="Karaffa L."/>
            <person name="Karanyi Z."/>
            <person name="Krasevec N."/>
            <person name="Kuo A."/>
            <person name="Kusch H."/>
            <person name="LaButti K."/>
            <person name="Lagendijk E.L."/>
            <person name="Lapidus A."/>
            <person name="Levasseur A."/>
            <person name="Lindquist E."/>
            <person name="Lipzen A."/>
            <person name="Logrieco A.F."/>
            <person name="MacCabe A."/>
            <person name="Maekelae M.R."/>
            <person name="Malavazi I."/>
            <person name="Melin P."/>
            <person name="Meyer V."/>
            <person name="Mielnichuk N."/>
            <person name="Miskei M."/>
            <person name="Molnar A.P."/>
            <person name="Mule G."/>
            <person name="Ngan C.Y."/>
            <person name="Orejas M."/>
            <person name="Orosz E."/>
            <person name="Ouedraogo J.P."/>
            <person name="Overkamp K.M."/>
            <person name="Park H.-S."/>
            <person name="Perrone G."/>
            <person name="Piumi F."/>
            <person name="Punt P.J."/>
            <person name="Ram A.F."/>
            <person name="Ramon A."/>
            <person name="Rauscher S."/>
            <person name="Record E."/>
            <person name="Riano-Pachon D.M."/>
            <person name="Robert V."/>
            <person name="Roehrig J."/>
            <person name="Ruller R."/>
            <person name="Salamov A."/>
            <person name="Salih N.S."/>
            <person name="Samson R.A."/>
            <person name="Sandor E."/>
            <person name="Sanguinetti M."/>
            <person name="Schuetze T."/>
            <person name="Sepcic K."/>
            <person name="Shelest E."/>
            <person name="Sherlock G."/>
            <person name="Sophianopoulou V."/>
            <person name="Squina F.M."/>
            <person name="Sun H."/>
            <person name="Susca A."/>
            <person name="Todd R.B."/>
            <person name="Tsang A."/>
            <person name="Unkles S.E."/>
            <person name="van de Wiele N."/>
            <person name="van Rossen-Uffink D."/>
            <person name="Oliveira J.V."/>
            <person name="Vesth T.C."/>
            <person name="Visser J."/>
            <person name="Yu J.-H."/>
            <person name="Zhou M."/>
            <person name="Andersen M.R."/>
            <person name="Archer D.B."/>
            <person name="Baker S.E."/>
            <person name="Benoit I."/>
            <person name="Brakhage A.A."/>
            <person name="Braus G.H."/>
            <person name="Fischer R."/>
            <person name="Frisvad J.C."/>
            <person name="Goldman G.H."/>
            <person name="Houbraken J."/>
            <person name="Oakley B."/>
            <person name="Pocsi I."/>
            <person name="Scazzocchio C."/>
            <person name="Seiboth B."/>
            <person name="vanKuyk P.A."/>
            <person name="Wortman J."/>
            <person name="Dyer P.S."/>
            <person name="Grigoriev I.V."/>
        </authorList>
    </citation>
    <scope>NUCLEOTIDE SEQUENCE [LARGE SCALE GENOMIC DNA]</scope>
    <source>
        <strain>CBS 101740 / IMI 381727 / IBT 21946</strain>
    </source>
</reference>
<reference key="2">
    <citation type="journal article" date="2019" name="Biochemistry">
        <title>Biaryl-forming enzymes from Aspergilli exhibit substrate-dependent stereoselectivity.</title>
        <authorList>
            <person name="Obermaier S."/>
            <person name="Mueller M."/>
        </authorList>
    </citation>
    <scope>FUNCTION</scope>
</reference>
<keyword id="KW-0325">Glycoprotein</keyword>
<keyword id="KW-1185">Reference proteome</keyword>
<keyword id="KW-0732">Signal</keyword>
<feature type="signal peptide" evidence="1">
    <location>
        <begin position="1"/>
        <end position="20"/>
    </location>
</feature>
<feature type="chain" id="PRO_5012724922" description="Bifonsecin B biosynthesis cluster protein A" evidence="1">
    <location>
        <begin position="21"/>
        <end position="297"/>
    </location>
</feature>
<feature type="glycosylation site" description="N-linked (GlcNAc...) asparagine" evidence="2">
    <location>
        <position position="26"/>
    </location>
</feature>
<feature type="glycosylation site" description="N-linked (GlcNAc...) asparagine" evidence="2">
    <location>
        <position position="56"/>
    </location>
</feature>
<feature type="glycosylation site" description="N-linked (GlcNAc...) asparagine" evidence="2">
    <location>
        <position position="75"/>
    </location>
</feature>
<feature type="glycosylation site" description="N-linked (GlcNAc...) asparagine" evidence="2">
    <location>
        <position position="124"/>
    </location>
</feature>
<feature type="glycosylation site" description="N-linked (GlcNAc...) asparagine" evidence="2">
    <location>
        <position position="175"/>
    </location>
</feature>
<feature type="glycosylation site" description="N-linked (GlcNAc...) asparagine" evidence="2">
    <location>
        <position position="210"/>
    </location>
</feature>
<feature type="glycosylation site" description="N-linked (GlcNAc...) asparagine" evidence="2">
    <location>
        <position position="280"/>
    </location>
</feature>
<comment type="function">
    <text evidence="3 6">Part of the gene cluster that mediates the biosynthesis of bifonsecin B, a dimeric gamma-naphthopyrone (PubMed:31067027). The first step in the biosynthesis of bifonsecin B is the production of gamma-naphthopyrone precursor YWA1 by the non-reducing polyketide synthase albA, via condensation of one acetyl-CoA starter unit with 6 malonyl-CoA units (PubMed:31067027). YWA1 is then methylated by bfoE at position C-6 to yield foncesin which is further methylated at position C-8 by bfoD to produce fonsecin B (Probable). A key enzyme in the biosynthetic pathway is the cytochrome P450 monooxygenase bfoB which catalyzes the oxidative dimerization of fonsecin B to bifonsecin B (PubMed:31067027). Bfob also catalyzes the oxidative dimerization of rubrofusarin B into nigerone (PubMed:31067027). The stereoselectivity of bfoB is influenced by the two natural monomeric substrates; homodimerization of fonsecin B yields a stereochemically pure biaryl, M-foncerine B, while rubrofusarin B yields a mixture of enantiomers M- and P-nigerone (PubMed:31067027). The function of bfoA within the bifonsecin B biosynthesis pathway has not been determined yet (Probable).</text>
</comment>
<comment type="similarity">
    <text evidence="5">Belongs to the bfoA family.</text>
</comment>
<organism>
    <name type="scientific">Aspergillus brasiliensis (strain CBS 101740 / IMI 381727 / IBT 21946)</name>
    <dbReference type="NCBI Taxonomy" id="767769"/>
    <lineage>
        <taxon>Eukaryota</taxon>
        <taxon>Fungi</taxon>
        <taxon>Dikarya</taxon>
        <taxon>Ascomycota</taxon>
        <taxon>Pezizomycotina</taxon>
        <taxon>Eurotiomycetes</taxon>
        <taxon>Eurotiomycetidae</taxon>
        <taxon>Eurotiales</taxon>
        <taxon>Aspergillaceae</taxon>
        <taxon>Aspergillus</taxon>
        <taxon>Aspergillus subgen. Circumdati</taxon>
    </lineage>
</organism>
<evidence type="ECO:0000255" key="1"/>
<evidence type="ECO:0000255" key="2">
    <source>
        <dbReference type="PROSITE-ProRule" id="PRU00498"/>
    </source>
</evidence>
<evidence type="ECO:0000269" key="3">
    <source>
    </source>
</evidence>
<evidence type="ECO:0000303" key="4">
    <source>
    </source>
</evidence>
<evidence type="ECO:0000305" key="5"/>
<evidence type="ECO:0000305" key="6">
    <source>
    </source>
</evidence>
<protein>
    <recommendedName>
        <fullName evidence="4">Bifonsecin B biosynthesis cluster protein A</fullName>
    </recommendedName>
</protein>
<dbReference type="EMBL" id="KV878681">
    <property type="protein sequence ID" value="OJJ74131.1"/>
    <property type="molecule type" value="Genomic_DNA"/>
</dbReference>
<dbReference type="GlyCosmos" id="A0A1L9UR45">
    <property type="glycosylation" value="7 sites, No reported glycans"/>
</dbReference>
<dbReference type="VEuPathDB" id="FungiDB:ASPBRDRAFT_145890"/>
<dbReference type="OMA" id="TIDTWIE"/>
<dbReference type="OrthoDB" id="10010954at2759"/>
<dbReference type="Proteomes" id="UP000184499">
    <property type="component" value="Unassembled WGS sequence"/>
</dbReference>